<evidence type="ECO:0000250" key="1"/>
<evidence type="ECO:0000255" key="2"/>
<dbReference type="EC" id="3.1.3.27"/>
<dbReference type="EMBL" id="L42023">
    <property type="protein sequence ID" value="AAC22953.1"/>
    <property type="molecule type" value="Genomic_DNA"/>
</dbReference>
<dbReference type="PIR" id="D64025">
    <property type="entry name" value="D64025"/>
</dbReference>
<dbReference type="RefSeq" id="NP_439457.1">
    <property type="nucleotide sequence ID" value="NC_000907.1"/>
</dbReference>
<dbReference type="STRING" id="71421.HI_1306"/>
<dbReference type="EnsemblBacteria" id="AAC22953">
    <property type="protein sequence ID" value="AAC22953"/>
    <property type="gene ID" value="HI_1306"/>
</dbReference>
<dbReference type="KEGG" id="hin:HI_1306"/>
<dbReference type="PATRIC" id="fig|71421.8.peg.1358"/>
<dbReference type="eggNOG" id="COG1267">
    <property type="taxonomic scope" value="Bacteria"/>
</dbReference>
<dbReference type="HOGENOM" id="CLU_103734_0_1_6"/>
<dbReference type="OrthoDB" id="9804091at2"/>
<dbReference type="PhylomeDB" id="P44157"/>
<dbReference type="BioCyc" id="HINF71421:G1GJ1-1331-MONOMER"/>
<dbReference type="UniPathway" id="UPA00084">
    <property type="reaction ID" value="UER00504"/>
</dbReference>
<dbReference type="Proteomes" id="UP000000579">
    <property type="component" value="Chromosome"/>
</dbReference>
<dbReference type="GO" id="GO:0005886">
    <property type="term" value="C:plasma membrane"/>
    <property type="evidence" value="ECO:0007669"/>
    <property type="project" value="UniProtKB-SubCell"/>
</dbReference>
<dbReference type="GO" id="GO:0046872">
    <property type="term" value="F:metal ion binding"/>
    <property type="evidence" value="ECO:0007669"/>
    <property type="project" value="UniProtKB-KW"/>
</dbReference>
<dbReference type="GO" id="GO:0008962">
    <property type="term" value="F:phosphatidylglycerophosphatase activity"/>
    <property type="evidence" value="ECO:0000318"/>
    <property type="project" value="GO_Central"/>
</dbReference>
<dbReference type="GO" id="GO:0006655">
    <property type="term" value="P:phosphatidylglycerol biosynthetic process"/>
    <property type="evidence" value="ECO:0000318"/>
    <property type="project" value="GO_Central"/>
</dbReference>
<dbReference type="GO" id="GO:0009395">
    <property type="term" value="P:phospholipid catabolic process"/>
    <property type="evidence" value="ECO:0007669"/>
    <property type="project" value="UniProtKB-KW"/>
</dbReference>
<dbReference type="CDD" id="cd06971">
    <property type="entry name" value="PgpA"/>
    <property type="match status" value="1"/>
</dbReference>
<dbReference type="InterPro" id="IPR026037">
    <property type="entry name" value="PgpA"/>
</dbReference>
<dbReference type="InterPro" id="IPR036681">
    <property type="entry name" value="PgpA-like_sf"/>
</dbReference>
<dbReference type="InterPro" id="IPR007686">
    <property type="entry name" value="YutG/PgpA"/>
</dbReference>
<dbReference type="PANTHER" id="PTHR36305">
    <property type="entry name" value="PHOSPHATIDYLGLYCEROPHOSPHATASE A"/>
    <property type="match status" value="1"/>
</dbReference>
<dbReference type="PANTHER" id="PTHR36305:SF1">
    <property type="entry name" value="PHOSPHATIDYLGLYCEROPHOSPHATASE A"/>
    <property type="match status" value="1"/>
</dbReference>
<dbReference type="Pfam" id="PF04608">
    <property type="entry name" value="PgpA"/>
    <property type="match status" value="1"/>
</dbReference>
<dbReference type="PIRSF" id="PIRSF006162">
    <property type="entry name" value="PgpA"/>
    <property type="match status" value="1"/>
</dbReference>
<dbReference type="SUPFAM" id="SSF101307">
    <property type="entry name" value="YutG-like"/>
    <property type="match status" value="1"/>
</dbReference>
<reference key="1">
    <citation type="journal article" date="1995" name="Science">
        <title>Whole-genome random sequencing and assembly of Haemophilus influenzae Rd.</title>
        <authorList>
            <person name="Fleischmann R.D."/>
            <person name="Adams M.D."/>
            <person name="White O."/>
            <person name="Clayton R.A."/>
            <person name="Kirkness E.F."/>
            <person name="Kerlavage A.R."/>
            <person name="Bult C.J."/>
            <person name="Tomb J.-F."/>
            <person name="Dougherty B.A."/>
            <person name="Merrick J.M."/>
            <person name="McKenney K."/>
            <person name="Sutton G.G."/>
            <person name="FitzHugh W."/>
            <person name="Fields C.A."/>
            <person name="Gocayne J.D."/>
            <person name="Scott J.D."/>
            <person name="Shirley R."/>
            <person name="Liu L.-I."/>
            <person name="Glodek A."/>
            <person name="Kelley J.M."/>
            <person name="Weidman J.F."/>
            <person name="Phillips C.A."/>
            <person name="Spriggs T."/>
            <person name="Hedblom E."/>
            <person name="Cotton M.D."/>
            <person name="Utterback T.R."/>
            <person name="Hanna M.C."/>
            <person name="Nguyen D.T."/>
            <person name="Saudek D.M."/>
            <person name="Brandon R.C."/>
            <person name="Fine L.D."/>
            <person name="Fritchman J.L."/>
            <person name="Fuhrmann J.L."/>
            <person name="Geoghagen N.S.M."/>
            <person name="Gnehm C.L."/>
            <person name="McDonald L.A."/>
            <person name="Small K.V."/>
            <person name="Fraser C.M."/>
            <person name="Smith H.O."/>
            <person name="Venter J.C."/>
        </authorList>
    </citation>
    <scope>NUCLEOTIDE SEQUENCE [LARGE SCALE GENOMIC DNA]</scope>
    <source>
        <strain>ATCC 51907 / DSM 11121 / KW20 / Rd</strain>
    </source>
</reference>
<comment type="function">
    <text evidence="1">Lipid phosphatase which dephosphorylates phosphatidylglycerophosphate (PGP) to phosphatidylglycerol (PG).</text>
</comment>
<comment type="catalytic activity">
    <reaction>
        <text>a 1,2-diacyl-sn-glycero-3-phospho-(1'-sn-glycero-3'-phosphate) + H2O = a 1,2-diacyl-sn-glycero-3-phospho-(1'-sn-glycerol) + phosphate</text>
        <dbReference type="Rhea" id="RHEA:33751"/>
        <dbReference type="ChEBI" id="CHEBI:15377"/>
        <dbReference type="ChEBI" id="CHEBI:43474"/>
        <dbReference type="ChEBI" id="CHEBI:60110"/>
        <dbReference type="ChEBI" id="CHEBI:64716"/>
        <dbReference type="EC" id="3.1.3.27"/>
    </reaction>
</comment>
<comment type="cofactor">
    <cofactor evidence="1">
        <name>Mg(2+)</name>
        <dbReference type="ChEBI" id="CHEBI:18420"/>
    </cofactor>
</comment>
<comment type="pathway">
    <text>Phospholipid metabolism; phosphatidylglycerol biosynthesis; phosphatidylglycerol from CDP-diacylglycerol: step 2/2.</text>
</comment>
<comment type="subcellular location">
    <subcellularLocation>
        <location evidence="1">Cell inner membrane</location>
        <topology evidence="1">Multi-pass membrane protein</topology>
    </subcellularLocation>
</comment>
<accession>P44157</accession>
<proteinExistence type="inferred from homology"/>
<name>PGPA_HAEIN</name>
<gene>
    <name type="primary">pgpA</name>
    <name type="ordered locus">HI_1306</name>
</gene>
<protein>
    <recommendedName>
        <fullName>Phosphatidylglycerophosphatase A</fullName>
        <ecNumber>3.1.3.27</ecNumber>
    </recommendedName>
    <alternativeName>
        <fullName>Phosphatidylglycerolphosphate phosphatase A</fullName>
        <shortName>PGP phosphatase A</shortName>
    </alternativeName>
</protein>
<sequence>MTENNPLKKISLLNPIHLLAVGFGSGLIHPAPGTWGSLAGTILGVILLSLLGVKIFLIFTALCFLLGCYLCQKTTADMGVHDHGSIVWDEFVGVFIVLAAIPSLSWQWILAAFALFRFFDILKPFPIRYFDEKLENGFGIMIDDVLAAIYAVIVVFAIQYWML</sequence>
<organism>
    <name type="scientific">Haemophilus influenzae (strain ATCC 51907 / DSM 11121 / KW20 / Rd)</name>
    <dbReference type="NCBI Taxonomy" id="71421"/>
    <lineage>
        <taxon>Bacteria</taxon>
        <taxon>Pseudomonadati</taxon>
        <taxon>Pseudomonadota</taxon>
        <taxon>Gammaproteobacteria</taxon>
        <taxon>Pasteurellales</taxon>
        <taxon>Pasteurellaceae</taxon>
        <taxon>Haemophilus</taxon>
    </lineage>
</organism>
<feature type="chain" id="PRO_0000058360" description="Phosphatidylglycerophosphatase A">
    <location>
        <begin position="1"/>
        <end position="163"/>
    </location>
</feature>
<feature type="transmembrane region" description="Helical" evidence="2">
    <location>
        <begin position="10"/>
        <end position="28"/>
    </location>
</feature>
<feature type="transmembrane region" description="Helical" evidence="2">
    <location>
        <begin position="35"/>
        <end position="51"/>
    </location>
</feature>
<feature type="transmembrane region" description="Helical" evidence="2">
    <location>
        <begin position="92"/>
        <end position="116"/>
    </location>
</feature>
<feature type="transmembrane region" description="Helical" evidence="2">
    <location>
        <begin position="137"/>
        <end position="157"/>
    </location>
</feature>
<keyword id="KW-0997">Cell inner membrane</keyword>
<keyword id="KW-1003">Cell membrane</keyword>
<keyword id="KW-0378">Hydrolase</keyword>
<keyword id="KW-0442">Lipid degradation</keyword>
<keyword id="KW-0443">Lipid metabolism</keyword>
<keyword id="KW-0460">Magnesium</keyword>
<keyword id="KW-0472">Membrane</keyword>
<keyword id="KW-0479">Metal-binding</keyword>
<keyword id="KW-0595">Phospholipid degradation</keyword>
<keyword id="KW-1208">Phospholipid metabolism</keyword>
<keyword id="KW-1185">Reference proteome</keyword>
<keyword id="KW-0812">Transmembrane</keyword>
<keyword id="KW-1133">Transmembrane helix</keyword>